<proteinExistence type="evidence at protein level"/>
<organism>
    <name type="scientific">Castellaniella defragrans (strain DSM 12143 / CCUG 39792 / 65Phen)</name>
    <name type="common">Alcaligenes defragrans</name>
    <dbReference type="NCBI Taxonomy" id="1437824"/>
    <lineage>
        <taxon>Bacteria</taxon>
        <taxon>Pseudomonadati</taxon>
        <taxon>Pseudomonadota</taxon>
        <taxon>Betaproteobacteria</taxon>
        <taxon>Burkholderiales</taxon>
        <taxon>Alcaligenaceae</taxon>
        <taxon>Castellaniella</taxon>
    </lineage>
</organism>
<gene>
    <name evidence="5" type="primary">geoB</name>
    <name evidence="8" type="ORF">BN940_14181</name>
</gene>
<sequence length="478" mass="50637">MTIDHQHIFVGGQWIAPKSTQRSNILNASTEELVGSVPKCNNEDMDRAVAAAREAMRSLAWAGLDGKGRAQHLRRFADAVERRGQQLARSVSLQNGMPINVADQLESAFVVSLLRYYASLAENLVEEEARPSPTGSTTLVRRDPVGVVGAIIPWNFPVALSIFKIAPALAAGCAVVVKPSSGTVLDSYVLAEAAAEAGLPPGVINWVPGDRGIGSHLVSHPGVDKVAFTGSTSAGRIIAEACARLLRPVTLELGGKSAAIVLEDADLDALIRSLPMSSVLNNGQACFSCTRILAPAGRYDEVVDAIAGAVSAYSVGDALDRATVVGPMASAAHRDSVQRYIELGTGEARLVVGGGRTSQDRGWFVQPTVFADVDNRSRIAREEIFGPVLSIIRYEGEDEAVEIANDSEYGLGGTVWSTDHDHAVTIARRMETGTVGINGYMPDLNAPFGGVKSSGMGRELGPESIGAYQRYKSVYLLG</sequence>
<protein>
    <recommendedName>
        <fullName evidence="5">Geranial dehydrogenase</fullName>
        <shortName evidence="5">GaDH</shortName>
        <ecNumber evidence="3">1.2.1.86</ecNumber>
    </recommendedName>
    <alternativeName>
        <fullName evidence="5">Geraniol oxidation pathway protein B</fullName>
    </alternativeName>
    <alternativeName>
        <fullName evidence="6">Perillyl aldehyde dehydrogenase</fullName>
    </alternativeName>
</protein>
<feature type="initiator methionine" description="Removed" evidence="3">
    <location>
        <position position="1"/>
    </location>
</feature>
<feature type="chain" id="PRO_0000418649" description="Geranial dehydrogenase">
    <location>
        <begin position="2"/>
        <end position="478"/>
    </location>
</feature>
<feature type="active site" description="Proton acceptor" evidence="2">
    <location>
        <position position="252"/>
    </location>
</feature>
<feature type="active site" description="Nucleophile" evidence="2">
    <location>
        <position position="286"/>
    </location>
</feature>
<feature type="binding site" evidence="1">
    <location>
        <begin position="230"/>
        <end position="235"/>
    </location>
    <ligand>
        <name>NAD(+)</name>
        <dbReference type="ChEBI" id="CHEBI:57540"/>
    </ligand>
</feature>
<feature type="site" description="Transition state stabilizer" evidence="1">
    <location>
        <position position="155"/>
    </location>
</feature>
<reference key="1">
    <citation type="journal article" date="2012" name="Appl. Environ. Microbiol.">
        <title>Geraniol and geranial dehydrogenases induced in anaerobic monoterpene degradation by Castellaniella defragrans.</title>
        <authorList>
            <person name="Luddeke F."/>
            <person name="Wulfing A."/>
            <person name="Timke M."/>
            <person name="Germer F."/>
            <person name="Weber J."/>
            <person name="Dikfidan A."/>
            <person name="Rahnfeld T."/>
            <person name="Linder D."/>
            <person name="Meyerdierks A."/>
            <person name="Harder J."/>
        </authorList>
    </citation>
    <scope>NUCLEOTIDE SEQUENCE [GENOMIC DNA]</scope>
    <scope>PROTEIN SEQUENCE OF 2-18</scope>
    <scope>FUNCTION</scope>
    <scope>CATALYTIC ACTIVITY</scope>
    <scope>SUBSTRATE SPECIFICITY</scope>
    <scope>INDUCTION</scope>
    <scope>GENE NAME</scope>
    <scope>PATHWAY</scope>
    <source>
        <strain>DSM 12143 / CCUG 39792 / 65Phen</strain>
    </source>
</reference>
<reference key="2">
    <citation type="journal article" date="2014" name="BMC Microbiol.">
        <title>The oxygen-independent metabolism of cyclic monoterpenes in Castellaniella defragrans 65Phen.</title>
        <authorList>
            <person name="Petasch J."/>
            <person name="Disch E.M."/>
            <person name="Markert S."/>
            <person name="Becher D."/>
            <person name="Schweder T."/>
            <person name="Huttel B."/>
            <person name="Reinhardt R."/>
            <person name="Harder J."/>
        </authorList>
    </citation>
    <scope>NUCLEOTIDE SEQUENCE [LARGE SCALE GENOMIC DNA]</scope>
    <scope>IDENTIFICATION BY MASS SPECTROMETRY</scope>
    <scope>FUNCTION</scope>
    <scope>PATHWAY</scope>
    <scope>INDUCTION</scope>
    <scope>DISRUPTION PHENOTYPE</scope>
    <source>
        <strain>DSM 12143 / CCUG 39792 / 65Phen</strain>
    </source>
</reference>
<name>GEOB_CASD6</name>
<keyword id="KW-0903">Direct protein sequencing</keyword>
<keyword id="KW-0520">NAD</keyword>
<keyword id="KW-0560">Oxidoreductase</keyword>
<keyword id="KW-1185">Reference proteome</keyword>
<accession>H1ZV37</accession>
<accession>W8X5L1</accession>
<evidence type="ECO:0000250" key="1"/>
<evidence type="ECO:0000255" key="2">
    <source>
        <dbReference type="PROSITE-ProRule" id="PRU10007"/>
    </source>
</evidence>
<evidence type="ECO:0000269" key="3">
    <source>
    </source>
</evidence>
<evidence type="ECO:0000269" key="4">
    <source>
    </source>
</evidence>
<evidence type="ECO:0000303" key="5">
    <source>
    </source>
</evidence>
<evidence type="ECO:0000305" key="6"/>
<evidence type="ECO:0000305" key="7">
    <source>
    </source>
</evidence>
<evidence type="ECO:0000312" key="8">
    <source>
        <dbReference type="EMBL" id="CDM25281.1"/>
    </source>
</evidence>
<comment type="function">
    <text evidence="3 4 7">Involved in the degradation of the monoterpenes beta-myrcene and limonene (PubMed:22286981, PubMed:24952578). During anaerobic degradation of beta-myrcene, catalyzes the NAD(+)-dependent oxidation of geranial to geranic acid (PubMed:22286981). Seems to be specific for the trans-isomer geranial, since it does not act on the cis-isomer neral (PubMed:22286981). During degradation of limonene, catalyzes the NAD(+)-dependent conversion of perillyl aldehyde to perrilic acid (Probable).</text>
</comment>
<comment type="catalytic activity">
    <reaction evidence="3">
        <text>(2E)-geranial + NAD(+) + H2O = geranate + NADH + 2 H(+)</text>
        <dbReference type="Rhea" id="RHEA:34351"/>
        <dbReference type="ChEBI" id="CHEBI:15377"/>
        <dbReference type="ChEBI" id="CHEBI:15378"/>
        <dbReference type="ChEBI" id="CHEBI:16980"/>
        <dbReference type="ChEBI" id="CHEBI:57540"/>
        <dbReference type="ChEBI" id="CHEBI:57945"/>
        <dbReference type="ChEBI" id="CHEBI:67260"/>
        <dbReference type="EC" id="1.2.1.86"/>
    </reaction>
    <physiologicalReaction direction="left-to-right" evidence="3">
        <dbReference type="Rhea" id="RHEA:34352"/>
    </physiologicalReaction>
</comment>
<comment type="catalytic activity">
    <reaction evidence="7">
        <text>perillyl aldehyde + NAD(+) + H2O = perillate + NADH + 2 H(+)</text>
        <dbReference type="Rhea" id="RHEA:31299"/>
        <dbReference type="ChEBI" id="CHEBI:15377"/>
        <dbReference type="ChEBI" id="CHEBI:15378"/>
        <dbReference type="ChEBI" id="CHEBI:15421"/>
        <dbReference type="ChEBI" id="CHEBI:57540"/>
        <dbReference type="ChEBI" id="CHEBI:57945"/>
        <dbReference type="ChEBI" id="CHEBI:62641"/>
    </reaction>
    <physiologicalReaction direction="left-to-right" evidence="7">
        <dbReference type="Rhea" id="RHEA:31300"/>
    </physiologicalReaction>
</comment>
<comment type="pathway">
    <text evidence="3 4">Terpene metabolism; monoterpene degradation.</text>
</comment>
<comment type="induction">
    <text evidence="3 4">By the monoterpene alpha-phellandrene, but not by acetate.</text>
</comment>
<comment type="disruption phenotype">
    <text evidence="4">The deletion mutant can grow on acetate and perillic acid, but lacks the ability to grow on beta-myrcene, limonene, perillyl alcohol and perillyl aldehyde.</text>
</comment>
<comment type="similarity">
    <text evidence="6">Belongs to the aldehyde dehydrogenase family.</text>
</comment>
<dbReference type="EC" id="1.2.1.86" evidence="3"/>
<dbReference type="EMBL" id="FR669447">
    <property type="protein sequence ID" value="CCF55023.1"/>
    <property type="molecule type" value="Genomic_DNA"/>
</dbReference>
<dbReference type="EMBL" id="HG916765">
    <property type="protein sequence ID" value="CDM25281.1"/>
    <property type="molecule type" value="Genomic_DNA"/>
</dbReference>
<dbReference type="RefSeq" id="WP_043683932.1">
    <property type="nucleotide sequence ID" value="NZ_HG916765.1"/>
</dbReference>
<dbReference type="SMR" id="H1ZV37"/>
<dbReference type="STRING" id="1437824.BN940_14181"/>
<dbReference type="KEGG" id="cdn:BN940_14181"/>
<dbReference type="PATRIC" id="fig|1437824.5.peg.2800"/>
<dbReference type="eggNOG" id="COG1012">
    <property type="taxonomic scope" value="Bacteria"/>
</dbReference>
<dbReference type="HOGENOM" id="CLU_005391_0_2_4"/>
<dbReference type="OrthoDB" id="6187633at2"/>
<dbReference type="BioCyc" id="MetaCyc:MONOMER-17745"/>
<dbReference type="UniPathway" id="UPA00137"/>
<dbReference type="Proteomes" id="UP000019805">
    <property type="component" value="Chromosome"/>
</dbReference>
<dbReference type="GO" id="GO:0034832">
    <property type="term" value="F:geranial dehydrogenase activity"/>
    <property type="evidence" value="ECO:0000314"/>
    <property type="project" value="UniProtKB"/>
</dbReference>
<dbReference type="GO" id="GO:0051287">
    <property type="term" value="F:NAD binding"/>
    <property type="evidence" value="ECO:0000314"/>
    <property type="project" value="UniProtKB"/>
</dbReference>
<dbReference type="GO" id="GO:0043694">
    <property type="term" value="P:monoterpene catabolic process"/>
    <property type="evidence" value="ECO:0000304"/>
    <property type="project" value="UniProtKB"/>
</dbReference>
<dbReference type="GO" id="GO:0016098">
    <property type="term" value="P:monoterpenoid metabolic process"/>
    <property type="evidence" value="ECO:0000314"/>
    <property type="project" value="UniProtKB"/>
</dbReference>
<dbReference type="CDD" id="cd07139">
    <property type="entry name" value="ALDH_AldA-Rv0768"/>
    <property type="match status" value="1"/>
</dbReference>
<dbReference type="FunFam" id="3.40.309.10:FF:000009">
    <property type="entry name" value="Aldehyde dehydrogenase A"/>
    <property type="match status" value="1"/>
</dbReference>
<dbReference type="FunFam" id="3.40.605.10:FF:000007">
    <property type="entry name" value="NAD/NADP-dependent betaine aldehyde dehydrogenase"/>
    <property type="match status" value="1"/>
</dbReference>
<dbReference type="Gene3D" id="3.40.605.10">
    <property type="entry name" value="Aldehyde Dehydrogenase, Chain A, domain 1"/>
    <property type="match status" value="1"/>
</dbReference>
<dbReference type="Gene3D" id="3.40.309.10">
    <property type="entry name" value="Aldehyde Dehydrogenase, Chain A, domain 2"/>
    <property type="match status" value="1"/>
</dbReference>
<dbReference type="InterPro" id="IPR016161">
    <property type="entry name" value="Ald_DH/histidinol_DH"/>
</dbReference>
<dbReference type="InterPro" id="IPR016163">
    <property type="entry name" value="Ald_DH_C"/>
</dbReference>
<dbReference type="InterPro" id="IPR029510">
    <property type="entry name" value="Ald_DH_CS_GLU"/>
</dbReference>
<dbReference type="InterPro" id="IPR016162">
    <property type="entry name" value="Ald_DH_N"/>
</dbReference>
<dbReference type="InterPro" id="IPR015590">
    <property type="entry name" value="Aldehyde_DH_dom"/>
</dbReference>
<dbReference type="PANTHER" id="PTHR42804">
    <property type="entry name" value="ALDEHYDE DEHYDROGENASE"/>
    <property type="match status" value="1"/>
</dbReference>
<dbReference type="PANTHER" id="PTHR42804:SF1">
    <property type="entry name" value="ALDEHYDE DEHYDROGENASE-RELATED"/>
    <property type="match status" value="1"/>
</dbReference>
<dbReference type="Pfam" id="PF00171">
    <property type="entry name" value="Aldedh"/>
    <property type="match status" value="1"/>
</dbReference>
<dbReference type="SUPFAM" id="SSF53720">
    <property type="entry name" value="ALDH-like"/>
    <property type="match status" value="1"/>
</dbReference>
<dbReference type="PROSITE" id="PS00687">
    <property type="entry name" value="ALDEHYDE_DEHYDR_GLU"/>
    <property type="match status" value="1"/>
</dbReference>